<comment type="function">
    <text evidence="1 2 3">Multifunctional dioxygenase; part of the gene cluster that mediates the biosynthesis of calidodehydroaustin, a fungal meroterpenoid (PubMed:28233494, PubMed:29076725). The first step of the pathway is the synthesis of 3,5-dimethylorsellinic acid by the polyketide synthase ausA (PubMed:28233494). 3,5-dimethylorsellinic acid is then prenylated by the polyprenyl transferase ausN (PubMed:28233494). Further epoxidation by the FAD-dependent monooxygenase ausM and cyclization by the probable terpene cyclase ausL lead to the formation of protoaustinoid A (By similarity). Protoaustinoid A is then oxidized to spiro-lactone preaustinoid A3 by the combined action of the FAD-binding monooxygenases ausB and ausC, and the dioxygenase ausE (By similarity). Acid-catalyzed keto-rearrangement and ring contraction of the tetraketide portion of preaustinoid A3 by ausJ lead to the formation of preaustinoid A4 (By similarity). The aldo-keto reductase ausK, with the help of ausH, is involved in the next step by transforming preaustinoid A4 into isoaustinone which is in turn hydroxylated by the P450 monooxygenase ausI to form austinolide (By similarity). The cytochrome P450 monooxygenase ausG modifies austinolide to austinol (By similarity). Austinol is further acetylated to austin by the O-acetyltransferase ausP, which spontaneously changes to dehydroaustin (PubMed:28233494). The cytochrome P450 monooxygenase ausR then converts dehydroaustin is into 7-dehydrodehydroaustin (PubMed:28233494). The hydroxylation catalyzed by ausR permits the O-acetyltransferase ausQ to add an additional acetyl group to the molecule, leading to the formation of acetoxydehydroaustin (PubMed:28233494). The short chain dehydrogenase ausT catalyzes the reduction of the double bond present between carbon atoms 1 and 2 to convert 7-dehydrodehydroaustin into 1,2-dihydro-7-hydroxydehydroaustin (PubMed:28233494). AusQ catalyzes not only an acetylation reaction but also the addition of the PKS ausV diketide product to 1,2-dihydro-7-hydroxydehydroaustin, forming precalidodehydroaustin (PubMed:28233494). Finally, the iron/alpha-ketoglutarate-dependent dioxygenase converts precalidodehydroaustin into calidodehydroaustin (PubMed:28233494).</text>
</comment>
<comment type="catalytic activity">
    <reaction evidence="1">
        <text>preaustinoid A1 + 2-oxoglutarate + O2 = preaustinoid A2 + succinate + CO2 + H2O</text>
        <dbReference type="Rhea" id="RHEA:65132"/>
        <dbReference type="ChEBI" id="CHEBI:15377"/>
        <dbReference type="ChEBI" id="CHEBI:15379"/>
        <dbReference type="ChEBI" id="CHEBI:16526"/>
        <dbReference type="ChEBI" id="CHEBI:16810"/>
        <dbReference type="ChEBI" id="CHEBI:30031"/>
        <dbReference type="ChEBI" id="CHEBI:69026"/>
        <dbReference type="ChEBI" id="CHEBI:156343"/>
    </reaction>
    <physiologicalReaction direction="left-to-right" evidence="1">
        <dbReference type="Rhea" id="RHEA:65133"/>
    </physiologicalReaction>
</comment>
<comment type="catalytic activity">
    <reaction evidence="1">
        <text>preaustinoid A2 + 2-oxoglutarate + O2 = preaustinoid A3 + succinate + CO2 + H2O</text>
        <dbReference type="Rhea" id="RHEA:65156"/>
        <dbReference type="ChEBI" id="CHEBI:15377"/>
        <dbReference type="ChEBI" id="CHEBI:15379"/>
        <dbReference type="ChEBI" id="CHEBI:16526"/>
        <dbReference type="ChEBI" id="CHEBI:16810"/>
        <dbReference type="ChEBI" id="CHEBI:30031"/>
        <dbReference type="ChEBI" id="CHEBI:156343"/>
        <dbReference type="ChEBI" id="CHEBI:156346"/>
    </reaction>
    <physiologicalReaction direction="left-to-right" evidence="1">
        <dbReference type="Rhea" id="RHEA:65157"/>
    </physiologicalReaction>
</comment>
<comment type="catalytic activity">
    <reaction evidence="1">
        <text>berkeleyone A + 2-oxoglutarate + O2 = preaustinoid A + succinate + CO2 + H2O</text>
        <dbReference type="Rhea" id="RHEA:65144"/>
        <dbReference type="ChEBI" id="CHEBI:15377"/>
        <dbReference type="ChEBI" id="CHEBI:15379"/>
        <dbReference type="ChEBI" id="CHEBI:16526"/>
        <dbReference type="ChEBI" id="CHEBI:16810"/>
        <dbReference type="ChEBI" id="CHEBI:30031"/>
        <dbReference type="ChEBI" id="CHEBI:69023"/>
        <dbReference type="ChEBI" id="CHEBI:69024"/>
    </reaction>
    <physiologicalReaction direction="left-to-right" evidence="1">
        <dbReference type="Rhea" id="RHEA:65145"/>
    </physiologicalReaction>
</comment>
<comment type="cofactor">
    <cofactor evidence="1">
        <name>Fe cation</name>
        <dbReference type="ChEBI" id="CHEBI:24875"/>
    </cofactor>
</comment>
<comment type="pathway">
    <text evidence="6">Secondary metabolite biosynthesis; terpenoid biosynthesis.</text>
</comment>
<comment type="subunit">
    <text evidence="1">Homodimer.</text>
</comment>
<comment type="miscellaneous">
    <text evidence="7">In A.calidoustus, the austinoid gene cluster lies on a contiguous DNA region, while clusters from E.nidulans and P.brasilianum are split in their respective genomes. Genetic rearrangements provoked variability among the clusters and E.nidulans produces the least number of austionoid derivatives with the end products austinol and dehydroaustinol, while P.brasilianum can produce until acetoxydehydroaustin, and A.calidoustus produces the highest number of identified derivatives.</text>
</comment>
<comment type="similarity">
    <text evidence="5">Belongs to the PhyH family.</text>
</comment>
<protein>
    <recommendedName>
        <fullName evidence="4">Multifunctional dioxygenase ausE</fullName>
        <ecNumber evidence="6">1.14.11.-</ecNumber>
    </recommendedName>
    <alternativeName>
        <fullName evidence="4">Austinoid biosynthesis cluster protein E</fullName>
    </alternativeName>
</protein>
<feature type="chain" id="PRO_0000453852" description="Multifunctional dioxygenase ausE">
    <location>
        <begin position="1"/>
        <end position="298"/>
    </location>
</feature>
<feature type="binding site" evidence="1">
    <location>
        <position position="72"/>
    </location>
    <ligand>
        <name>substrate</name>
    </ligand>
</feature>
<feature type="binding site" evidence="1">
    <location>
        <position position="127"/>
    </location>
    <ligand>
        <name>substrate</name>
    </ligand>
</feature>
<feature type="binding site" evidence="1">
    <location>
        <position position="130"/>
    </location>
    <ligand>
        <name>Fe cation</name>
        <dbReference type="ChEBI" id="CHEBI:24875"/>
    </ligand>
</feature>
<feature type="binding site" evidence="1">
    <location>
        <position position="132"/>
    </location>
    <ligand>
        <name>Fe cation</name>
        <dbReference type="ChEBI" id="CHEBI:24875"/>
    </ligand>
</feature>
<feature type="binding site" evidence="1">
    <location>
        <position position="167"/>
    </location>
    <ligand>
        <name>substrate</name>
    </ligand>
</feature>
<feature type="binding site" evidence="1">
    <location>
        <position position="214"/>
    </location>
    <ligand>
        <name>Fe cation</name>
        <dbReference type="ChEBI" id="CHEBI:24875"/>
    </ligand>
</feature>
<feature type="binding site" evidence="1">
    <location>
        <position position="226"/>
    </location>
    <ligand>
        <name>substrate</name>
    </ligand>
</feature>
<feature type="site" description="Important for reaction specificity" evidence="1">
    <location>
        <position position="150"/>
    </location>
</feature>
<feature type="site" description="Important for reaction specificity" evidence="1">
    <location>
        <position position="232"/>
    </location>
</feature>
<proteinExistence type="inferred from homology"/>
<dbReference type="EC" id="1.14.11.-" evidence="6"/>
<dbReference type="EMBL" id="CDMC01000024">
    <property type="protein sequence ID" value="CEL11251.1"/>
    <property type="molecule type" value="Genomic_DNA"/>
</dbReference>
<dbReference type="SMR" id="A0A0U5GHG9"/>
<dbReference type="STRING" id="454130.A0A0U5GHG9"/>
<dbReference type="OMA" id="GYWMNTS"/>
<dbReference type="OrthoDB" id="445007at2759"/>
<dbReference type="UniPathway" id="UPA00213"/>
<dbReference type="Proteomes" id="UP000054771">
    <property type="component" value="Unassembled WGS sequence"/>
</dbReference>
<dbReference type="GO" id="GO:0051213">
    <property type="term" value="F:dioxygenase activity"/>
    <property type="evidence" value="ECO:0007669"/>
    <property type="project" value="UniProtKB-KW"/>
</dbReference>
<dbReference type="GO" id="GO:0046872">
    <property type="term" value="F:metal ion binding"/>
    <property type="evidence" value="ECO:0007669"/>
    <property type="project" value="UniProtKB-KW"/>
</dbReference>
<dbReference type="GO" id="GO:0016114">
    <property type="term" value="P:terpenoid biosynthetic process"/>
    <property type="evidence" value="ECO:0007669"/>
    <property type="project" value="UniProtKB-UniPathway"/>
</dbReference>
<dbReference type="FunFam" id="2.60.120.620:FF:000089">
    <property type="entry name" value="Multifunctional dioxygenase ausE"/>
    <property type="match status" value="1"/>
</dbReference>
<dbReference type="Gene3D" id="2.60.120.620">
    <property type="entry name" value="q2cbj1_9rhob like domain"/>
    <property type="match status" value="1"/>
</dbReference>
<dbReference type="InterPro" id="IPR008775">
    <property type="entry name" value="Phytyl_CoA_dOase-like"/>
</dbReference>
<dbReference type="PANTHER" id="PTHR20883:SF19">
    <property type="entry name" value="MULTIFUNCTIONAL DIOXYGENASE AUSE"/>
    <property type="match status" value="1"/>
</dbReference>
<dbReference type="PANTHER" id="PTHR20883">
    <property type="entry name" value="PHYTANOYL-COA DIOXYGENASE DOMAIN CONTAINING 1"/>
    <property type="match status" value="1"/>
</dbReference>
<dbReference type="Pfam" id="PF05721">
    <property type="entry name" value="PhyH"/>
    <property type="match status" value="1"/>
</dbReference>
<dbReference type="SUPFAM" id="SSF51197">
    <property type="entry name" value="Clavaminate synthase-like"/>
    <property type="match status" value="1"/>
</dbReference>
<evidence type="ECO:0000250" key="1">
    <source>
        <dbReference type="UniProtKB" id="Q5AR34"/>
    </source>
</evidence>
<evidence type="ECO:0000269" key="2">
    <source>
    </source>
</evidence>
<evidence type="ECO:0000269" key="3">
    <source>
    </source>
</evidence>
<evidence type="ECO:0000303" key="4">
    <source>
    </source>
</evidence>
<evidence type="ECO:0000305" key="5"/>
<evidence type="ECO:0000305" key="6">
    <source>
    </source>
</evidence>
<evidence type="ECO:0000305" key="7">
    <source>
    </source>
</evidence>
<reference key="1">
    <citation type="journal article" date="2016" name="Genome Announc.">
        <title>Draft genome sequences of fungus Aspergillus calidoustus.</title>
        <authorList>
            <person name="Horn F."/>
            <person name="Linde J."/>
            <person name="Mattern D.J."/>
            <person name="Walther G."/>
            <person name="Guthke R."/>
            <person name="Scherlach K."/>
            <person name="Martin K."/>
            <person name="Brakhage A.A."/>
            <person name="Petzke L."/>
            <person name="Valiante V."/>
        </authorList>
    </citation>
    <scope>NUCLEOTIDE SEQUENCE [LARGE SCALE GENOMIC DNA]</scope>
    <source>
        <strain>SF006504</strain>
    </source>
</reference>
<reference key="2">
    <citation type="journal article" date="2017" name="ACS Chem. Biol.">
        <title>Discovery of an Extended Austinoid Biosynthetic Pathway in Aspergillus calidoustus.</title>
        <authorList>
            <person name="Valiante V."/>
            <person name="Mattern D.J."/>
            <person name="Schueffler A."/>
            <person name="Horn F."/>
            <person name="Walther G."/>
            <person name="Scherlach K."/>
            <person name="Petzke L."/>
            <person name="Dickhaut J."/>
            <person name="Guthke R."/>
            <person name="Hertweck C."/>
            <person name="Nett M."/>
            <person name="Thines E."/>
            <person name="Brakhage A.A."/>
        </authorList>
    </citation>
    <scope>FUNCTION</scope>
    <scope>PATHWAY</scope>
</reference>
<reference key="3">
    <citation type="journal article" date="2017" name="ACS Chem. Biol.">
        <title>Rewiring of the austinoid biosynthetic pathway in filamentous fungi.</title>
        <authorList>
            <person name="Mattern D.J."/>
            <person name="Valiante V."/>
            <person name="Horn F."/>
            <person name="Petzke L."/>
            <person name="Brakhage A.A."/>
        </authorList>
    </citation>
    <scope>FUNCTION</scope>
</reference>
<organism>
    <name type="scientific">Aspergillus calidoustus</name>
    <dbReference type="NCBI Taxonomy" id="454130"/>
    <lineage>
        <taxon>Eukaryota</taxon>
        <taxon>Fungi</taxon>
        <taxon>Dikarya</taxon>
        <taxon>Ascomycota</taxon>
        <taxon>Pezizomycotina</taxon>
        <taxon>Eurotiomycetes</taxon>
        <taxon>Eurotiomycetidae</taxon>
        <taxon>Eurotiales</taxon>
        <taxon>Aspergillaceae</taxon>
        <taxon>Aspergillus</taxon>
        <taxon>Aspergillus subgen. Nidulantes</taxon>
    </lineage>
</organism>
<sequence length="298" mass="33231">MGSATPPRLQKFPATAPADDIYAAFKQDGCVIIEGFVPPDQMARFSQEIQPAMEKIQVQVTNDGNSNDRVKRFSKLVTTSPTFRHEILENDLMHELLQRVFSKPGEGLGYHFNDTMVIEVQPGAPAQRLHRDQELYPWWNSMGPNAPECLVNFFCAVTPFTAENGATRLVPGSNRWPELTLINAAECPQYGNIESAPAIMQPGDCYMMSGKVIHGAGHNATLSDQRRALAFSTIRRELRPVQAFPLWIPMKIARELSPRTQAMFGFRSSTQHCDVDTVHFWGNDGKDIGEHLGLMSSA</sequence>
<keyword id="KW-0223">Dioxygenase</keyword>
<keyword id="KW-0408">Iron</keyword>
<keyword id="KW-0479">Metal-binding</keyword>
<keyword id="KW-0560">Oxidoreductase</keyword>
<keyword id="KW-1185">Reference proteome</keyword>
<gene>
    <name evidence="4" type="primary">ausE</name>
    <name type="ORF">ASPCAL14354</name>
</gene>
<name>AUSE_ASPCI</name>
<accession>A0A0U5GHG9</accession>